<evidence type="ECO:0000250" key="1"/>
<evidence type="ECO:0000250" key="2">
    <source>
        <dbReference type="UniProtKB" id="O00231"/>
    </source>
</evidence>
<evidence type="ECO:0000255" key="3">
    <source>
        <dbReference type="PROSITE-ProRule" id="PRU01185"/>
    </source>
</evidence>
<evidence type="ECO:0000305" key="4"/>
<name>PSD11_XENTR</name>
<proteinExistence type="inferred from homology"/>
<sequence length="422" mass="47341">MAAAAVIEFQRAQEMLVSDRAASIDILQSIVKRDIQESDEEALRVKEQSILELGGLLAKTGQAAELGGLLKYVRPFLNSISKAKAARLVRSLLDLFLDMEAATGQEVELCLECIEWAKAEKRTFLRQALEARLVSLYFDTKRYQEALQLGSQLLRELKKMDDKALLVEVQLLESKTYHALSNLPKARAALTSARTTANAIYCPPKLQAALDMQSGIIHAAEEKDWKTAYSYFYEAFEGNDSIDSPKAITALKYMLLCKIMLNTPEDVQALVSGKLALRYAGRQTEALKCVAQASKNRSLANFEKALTDYKAELRDDPIISTHLAKLYDNLLEQNLIRVIEPFSRVQIDHISSLIKLPKPEVERKLSQMILDKKFHGILDQGEGVLIIFDEPPVDKTYEAALETIQNMSKVVDSLYNKAKKLT</sequence>
<dbReference type="EMBL" id="AAMC01047365">
    <property type="status" value="NOT_ANNOTATED_CDS"/>
    <property type="molecule type" value="Genomic_DNA"/>
</dbReference>
<dbReference type="RefSeq" id="XP_002935612.1">
    <property type="nucleotide sequence ID" value="XM_002935566.5"/>
</dbReference>
<dbReference type="SMR" id="F6XBL2"/>
<dbReference type="FunCoup" id="F6XBL2">
    <property type="interactions" value="3165"/>
</dbReference>
<dbReference type="STRING" id="8364.ENSXETP00000031876"/>
<dbReference type="PaxDb" id="8364-ENSXETP00000062737"/>
<dbReference type="GeneID" id="100492225"/>
<dbReference type="KEGG" id="xtr:100492225"/>
<dbReference type="AGR" id="Xenbase:XB-GENE-922608"/>
<dbReference type="CTD" id="5717"/>
<dbReference type="Xenbase" id="XB-GENE-922608">
    <property type="gene designation" value="psmd11"/>
</dbReference>
<dbReference type="eggNOG" id="KOG1463">
    <property type="taxonomic scope" value="Eukaryota"/>
</dbReference>
<dbReference type="HOGENOM" id="CLU_029573_2_1_1"/>
<dbReference type="InParanoid" id="F6XBL2"/>
<dbReference type="OMA" id="ESKIYHA"/>
<dbReference type="OrthoDB" id="1418352at2759"/>
<dbReference type="PhylomeDB" id="F6XBL2"/>
<dbReference type="Reactome" id="R-XTR-1169091">
    <property type="pathway name" value="Activation of NF-kappaB in B cells"/>
</dbReference>
<dbReference type="Reactome" id="R-XTR-1234176">
    <property type="pathway name" value="Oxygen-dependent proline hydroxylation of Hypoxia-inducible Factor Alpha"/>
</dbReference>
<dbReference type="Reactome" id="R-XTR-1236978">
    <property type="pathway name" value="Cross-presentation of soluble exogenous antigens (endosomes)"/>
</dbReference>
<dbReference type="Reactome" id="R-XTR-174084">
    <property type="pathway name" value="Autodegradation of Cdh1 by Cdh1:APC/C"/>
</dbReference>
<dbReference type="Reactome" id="R-XTR-174113">
    <property type="pathway name" value="SCF-beta-TrCP mediated degradation of Emi1"/>
</dbReference>
<dbReference type="Reactome" id="R-XTR-174154">
    <property type="pathway name" value="APC/C:Cdc20 mediated degradation of Securin"/>
</dbReference>
<dbReference type="Reactome" id="R-XTR-174178">
    <property type="pathway name" value="APC/C:Cdh1 mediated degradation of Cdc20 and other APC/C:Cdh1 targeted proteins in late mitosis/early G1"/>
</dbReference>
<dbReference type="Reactome" id="R-XTR-174184">
    <property type="pathway name" value="Cdc20:Phospho-APC/C mediated degradation of Cyclin A"/>
</dbReference>
<dbReference type="Reactome" id="R-XTR-187577">
    <property type="pathway name" value="SCF(Skp2)-mediated degradation of p27/p21"/>
</dbReference>
<dbReference type="Reactome" id="R-XTR-2467813">
    <property type="pathway name" value="Separation of Sister Chromatids"/>
</dbReference>
<dbReference type="Reactome" id="R-XTR-349425">
    <property type="pathway name" value="Autodegradation of the E3 ubiquitin ligase COP1"/>
</dbReference>
<dbReference type="Reactome" id="R-XTR-350562">
    <property type="pathway name" value="Regulation of ornithine decarboxylase (ODC)"/>
</dbReference>
<dbReference type="Reactome" id="R-XTR-382556">
    <property type="pathway name" value="ABC-family proteins mediated transport"/>
</dbReference>
<dbReference type="Reactome" id="R-XTR-450408">
    <property type="pathway name" value="AUF1 (hnRNP D0) binds and destabilizes mRNA"/>
</dbReference>
<dbReference type="Reactome" id="R-XTR-4608870">
    <property type="pathway name" value="Asymmetric localization of PCP proteins"/>
</dbReference>
<dbReference type="Reactome" id="R-XTR-4641257">
    <property type="pathway name" value="Degradation of AXIN"/>
</dbReference>
<dbReference type="Reactome" id="R-XTR-5358346">
    <property type="pathway name" value="Hedgehog ligand biogenesis"/>
</dbReference>
<dbReference type="Reactome" id="R-XTR-5610780">
    <property type="pathway name" value="Degradation of GLI1 by the proteasome"/>
</dbReference>
<dbReference type="Reactome" id="R-XTR-5610785">
    <property type="pathway name" value="GLI3 is processed to GLI3R by the proteasome"/>
</dbReference>
<dbReference type="Reactome" id="R-XTR-5632684">
    <property type="pathway name" value="Hedgehog 'on' state"/>
</dbReference>
<dbReference type="Reactome" id="R-XTR-5668541">
    <property type="pathway name" value="TNFR2 non-canonical NF-kB pathway"/>
</dbReference>
<dbReference type="Reactome" id="R-XTR-5687128">
    <property type="pathway name" value="MAPK6/MAPK4 signaling"/>
</dbReference>
<dbReference type="Reactome" id="R-XTR-5689603">
    <property type="pathway name" value="UCH proteinases"/>
</dbReference>
<dbReference type="Reactome" id="R-XTR-5689880">
    <property type="pathway name" value="Ub-specific processing proteases"/>
</dbReference>
<dbReference type="Reactome" id="R-XTR-6798695">
    <property type="pathway name" value="Neutrophil degranulation"/>
</dbReference>
<dbReference type="Reactome" id="R-XTR-68867">
    <property type="pathway name" value="Assembly of the pre-replicative complex"/>
</dbReference>
<dbReference type="Reactome" id="R-XTR-68949">
    <property type="pathway name" value="Orc1 removal from chromatin"/>
</dbReference>
<dbReference type="Reactome" id="R-XTR-69017">
    <property type="pathway name" value="CDK-mediated phosphorylation and removal of Cdc6"/>
</dbReference>
<dbReference type="Reactome" id="R-XTR-69481">
    <property type="pathway name" value="G2/M Checkpoints"/>
</dbReference>
<dbReference type="Reactome" id="R-XTR-69601">
    <property type="pathway name" value="Ubiquitin Mediated Degradation of Phosphorylated Cdc25A"/>
</dbReference>
<dbReference type="Reactome" id="R-XTR-75815">
    <property type="pathway name" value="Ubiquitin-dependent degradation of Cyclin D"/>
</dbReference>
<dbReference type="Reactome" id="R-XTR-8852276">
    <property type="pathway name" value="The role of GTSE1 in G2/M progression after G2 checkpoint"/>
</dbReference>
<dbReference type="Reactome" id="R-XTR-8854050">
    <property type="pathway name" value="FBXL7 down-regulates AURKA during mitotic entry and in early mitosis"/>
</dbReference>
<dbReference type="Reactome" id="R-XTR-8939236">
    <property type="pathway name" value="RUNX1 regulates transcription of genes involved in differentiation of HSCs"/>
</dbReference>
<dbReference type="Reactome" id="R-XTR-8939902">
    <property type="pathway name" value="Regulation of RUNX2 expression and activity"/>
</dbReference>
<dbReference type="Reactome" id="R-XTR-8948751">
    <property type="pathway name" value="Regulation of PTEN stability and activity"/>
</dbReference>
<dbReference type="Reactome" id="R-XTR-8951664">
    <property type="pathway name" value="Neddylation"/>
</dbReference>
<dbReference type="Reactome" id="R-XTR-9755511">
    <property type="pathway name" value="KEAP1-NFE2L2 pathway"/>
</dbReference>
<dbReference type="Reactome" id="R-XTR-9762114">
    <property type="pathway name" value="GSK3B and BTRC:CUL1-mediated-degradation of NFE2L2"/>
</dbReference>
<dbReference type="Reactome" id="R-XTR-983168">
    <property type="pathway name" value="Antigen processing: Ubiquitination &amp; Proteasome degradation"/>
</dbReference>
<dbReference type="Reactome" id="R-XTR-9907900">
    <property type="pathway name" value="Proteasome assembly"/>
</dbReference>
<dbReference type="Proteomes" id="UP000008143">
    <property type="component" value="Chromosome 10"/>
</dbReference>
<dbReference type="Bgee" id="ENSXETG00000029937">
    <property type="expression patterns" value="Expressed in neurula embryo and 15 other cell types or tissues"/>
</dbReference>
<dbReference type="ExpressionAtlas" id="F6XBL2">
    <property type="expression patterns" value="differential"/>
</dbReference>
<dbReference type="GO" id="GO:0005829">
    <property type="term" value="C:cytosol"/>
    <property type="evidence" value="ECO:0007669"/>
    <property type="project" value="UniProtKB-SubCell"/>
</dbReference>
<dbReference type="GO" id="GO:0005634">
    <property type="term" value="C:nucleus"/>
    <property type="evidence" value="ECO:0007669"/>
    <property type="project" value="UniProtKB-SubCell"/>
</dbReference>
<dbReference type="GO" id="GO:0022624">
    <property type="term" value="C:proteasome accessory complex"/>
    <property type="evidence" value="ECO:0000250"/>
    <property type="project" value="UniProtKB"/>
</dbReference>
<dbReference type="GO" id="GO:0043248">
    <property type="term" value="P:proteasome assembly"/>
    <property type="evidence" value="ECO:0000250"/>
    <property type="project" value="UniProtKB"/>
</dbReference>
<dbReference type="GO" id="GO:0048863">
    <property type="term" value="P:stem cell differentiation"/>
    <property type="evidence" value="ECO:0000250"/>
    <property type="project" value="UniProtKB"/>
</dbReference>
<dbReference type="GO" id="GO:0006511">
    <property type="term" value="P:ubiquitin-dependent protein catabolic process"/>
    <property type="evidence" value="ECO:0000250"/>
    <property type="project" value="UniProtKB"/>
</dbReference>
<dbReference type="FunFam" id="1.25.40.570:FF:000003">
    <property type="entry name" value="26S proteasome non-ATPase regulatory subunit 11"/>
    <property type="match status" value="1"/>
</dbReference>
<dbReference type="Gene3D" id="1.25.40.570">
    <property type="match status" value="1"/>
</dbReference>
<dbReference type="InterPro" id="IPR050871">
    <property type="entry name" value="26S_Proteasome/COP9_Components"/>
</dbReference>
<dbReference type="InterPro" id="IPR000717">
    <property type="entry name" value="PCI_dom"/>
</dbReference>
<dbReference type="InterPro" id="IPR040780">
    <property type="entry name" value="Rpn6_C_helix"/>
</dbReference>
<dbReference type="InterPro" id="IPR040773">
    <property type="entry name" value="Rpn6_N"/>
</dbReference>
<dbReference type="InterPro" id="IPR011990">
    <property type="entry name" value="TPR-like_helical_dom_sf"/>
</dbReference>
<dbReference type="InterPro" id="IPR036390">
    <property type="entry name" value="WH_DNA-bd_sf"/>
</dbReference>
<dbReference type="PANTHER" id="PTHR10678">
    <property type="entry name" value="26S PROTEASOME NON-ATPASE REGULATORY SUBUNIT 11/COP9 SIGNALOSOME COMPLEX SUBUNIT 2"/>
    <property type="match status" value="1"/>
</dbReference>
<dbReference type="Pfam" id="PF01399">
    <property type="entry name" value="PCI"/>
    <property type="match status" value="1"/>
</dbReference>
<dbReference type="Pfam" id="PF18503">
    <property type="entry name" value="RPN6_C_helix"/>
    <property type="match status" value="1"/>
</dbReference>
<dbReference type="Pfam" id="PF18055">
    <property type="entry name" value="RPN6_N"/>
    <property type="match status" value="1"/>
</dbReference>
<dbReference type="SMART" id="SM00753">
    <property type="entry name" value="PAM"/>
    <property type="match status" value="1"/>
</dbReference>
<dbReference type="SMART" id="SM00088">
    <property type="entry name" value="PINT"/>
    <property type="match status" value="1"/>
</dbReference>
<dbReference type="SUPFAM" id="SSF48452">
    <property type="entry name" value="TPR-like"/>
    <property type="match status" value="1"/>
</dbReference>
<dbReference type="SUPFAM" id="SSF46785">
    <property type="entry name" value="Winged helix' DNA-binding domain"/>
    <property type="match status" value="1"/>
</dbReference>
<dbReference type="PROSITE" id="PS50250">
    <property type="entry name" value="PCI"/>
    <property type="match status" value="1"/>
</dbReference>
<comment type="function">
    <text evidence="2">Component of the 26S proteasome, a multiprotein complex involved in the ATP-dependent degradation of ubiquitinated proteins. This complex plays a key role in the maintenance of protein homeostasis by removing misfolded or damaged proteins, which could impair cellular functions, and by removing proteins whose functions are no longer required. Therefore, the proteasome participates in numerous cellular processes, including cell cycle progression, apoptosis, or DNA damage repair. In the complex, PSMD11 is required for proteasome assembly. Plays a key role in increased proteasome activity in embryonic stem cells (ESCs): its high expression in ESCs promotes enhanced assembly of the 26S proteasome, followed by higher proteasome activity.</text>
</comment>
<comment type="subunit">
    <text evidence="2">Component of the 19S proteasome regulatory particle complex. The 26S proteasome consists of a 20S core particle (CP) and two 19S regulatory subunits (RP). The regulatory particle is made of a lid composed of 9 subunits including PSMD11, a base containing 6 ATPases and few additional components.</text>
</comment>
<comment type="subcellular location">
    <subcellularLocation>
        <location evidence="1">Nucleus</location>
    </subcellularLocation>
    <subcellularLocation>
        <location evidence="1">Cytoplasm</location>
        <location evidence="1">Cytosol</location>
    </subcellularLocation>
</comment>
<comment type="similarity">
    <text evidence="4">Belongs to the proteasome subunit S9 family.</text>
</comment>
<keyword id="KW-0963">Cytoplasm</keyword>
<keyword id="KW-0539">Nucleus</keyword>
<keyword id="KW-0647">Proteasome</keyword>
<keyword id="KW-1185">Reference proteome</keyword>
<protein>
    <recommendedName>
        <fullName>26S proteasome non-ATPase regulatory subunit 11</fullName>
    </recommendedName>
    <alternativeName>
        <fullName>26S proteasome regulatory subunit RPN6</fullName>
    </alternativeName>
</protein>
<accession>F6XBL2</accession>
<feature type="chain" id="PRO_0000419981" description="26S proteasome non-ATPase regulatory subunit 11">
    <location>
        <begin position="1"/>
        <end position="422"/>
    </location>
</feature>
<feature type="domain" description="PCI" evidence="3">
    <location>
        <begin position="224"/>
        <end position="392"/>
    </location>
</feature>
<gene>
    <name type="primary">psmd11</name>
</gene>
<organism>
    <name type="scientific">Xenopus tropicalis</name>
    <name type="common">Western clawed frog</name>
    <name type="synonym">Silurana tropicalis</name>
    <dbReference type="NCBI Taxonomy" id="8364"/>
    <lineage>
        <taxon>Eukaryota</taxon>
        <taxon>Metazoa</taxon>
        <taxon>Chordata</taxon>
        <taxon>Craniata</taxon>
        <taxon>Vertebrata</taxon>
        <taxon>Euteleostomi</taxon>
        <taxon>Amphibia</taxon>
        <taxon>Batrachia</taxon>
        <taxon>Anura</taxon>
        <taxon>Pipoidea</taxon>
        <taxon>Pipidae</taxon>
        <taxon>Xenopodinae</taxon>
        <taxon>Xenopus</taxon>
        <taxon>Silurana</taxon>
    </lineage>
</organism>
<reference key="1">
    <citation type="journal article" date="2010" name="Science">
        <title>The genome of the Western clawed frog Xenopus tropicalis.</title>
        <authorList>
            <person name="Hellsten U."/>
            <person name="Harland R.M."/>
            <person name="Gilchrist M.J."/>
            <person name="Hendrix D."/>
            <person name="Jurka J."/>
            <person name="Kapitonov V."/>
            <person name="Ovcharenko I."/>
            <person name="Putnam N.H."/>
            <person name="Shu S."/>
            <person name="Taher L."/>
            <person name="Blitz I.L."/>
            <person name="Blumberg B."/>
            <person name="Dichmann D.S."/>
            <person name="Dubchak I."/>
            <person name="Amaya E."/>
            <person name="Detter J.C."/>
            <person name="Fletcher R."/>
            <person name="Gerhard D.S."/>
            <person name="Goodstein D."/>
            <person name="Graves T."/>
            <person name="Grigoriev I.V."/>
            <person name="Grimwood J."/>
            <person name="Kawashima T."/>
            <person name="Lindquist E."/>
            <person name="Lucas S.M."/>
            <person name="Mead P.E."/>
            <person name="Mitros T."/>
            <person name="Ogino H."/>
            <person name="Ohta Y."/>
            <person name="Poliakov A.V."/>
            <person name="Pollet N."/>
            <person name="Robert J."/>
            <person name="Salamov A."/>
            <person name="Sater A.K."/>
            <person name="Schmutz J."/>
            <person name="Terry A."/>
            <person name="Vize P.D."/>
            <person name="Warren W.C."/>
            <person name="Wells D."/>
            <person name="Wills A."/>
            <person name="Wilson R.K."/>
            <person name="Zimmerman L.B."/>
            <person name="Zorn A.M."/>
            <person name="Grainger R."/>
            <person name="Grammer T."/>
            <person name="Khokha M.K."/>
            <person name="Richardson P.M."/>
            <person name="Rokhsar D.S."/>
        </authorList>
    </citation>
    <scope>NUCLEOTIDE SEQUENCE [LARGE SCALE GENOMIC DNA]</scope>
</reference>